<sequence>SWCDPATLKYVSGITGCRAMVKLQCL</sequence>
<protein>
    <recommendedName>
        <fullName evidence="2">Alpha-amylase inhibitor 1</fullName>
    </recommendedName>
</protein>
<organism evidence="2">
    <name type="scientific">Saussurea costus</name>
    <name type="common">Costus</name>
    <name type="synonym">Aucklandia costus</name>
    <dbReference type="NCBI Taxonomy" id="324593"/>
    <lineage>
        <taxon>Eukaryota</taxon>
        <taxon>Viridiplantae</taxon>
        <taxon>Streptophyta</taxon>
        <taxon>Embryophyta</taxon>
        <taxon>Tracheophyta</taxon>
        <taxon>Spermatophyta</taxon>
        <taxon>Magnoliopsida</taxon>
        <taxon>eudicotyledons</taxon>
        <taxon>Gunneridae</taxon>
        <taxon>Pentapetalae</taxon>
        <taxon>asterids</taxon>
        <taxon>campanulids</taxon>
        <taxon>Asterales</taxon>
        <taxon>Asteraceae</taxon>
        <taxon>Carduoideae</taxon>
        <taxon>Cardueae</taxon>
        <taxon>Saussureinae</taxon>
        <taxon>Saussurea</taxon>
    </lineage>
</organism>
<accession>C0HM37</accession>
<evidence type="ECO:0000250" key="1">
    <source>
        <dbReference type="UniProtKB" id="P01083"/>
    </source>
</evidence>
<evidence type="ECO:0000303" key="2">
    <source ref="1"/>
</evidence>
<evidence type="ECO:0000305" key="3"/>
<reference evidence="3" key="1">
    <citation type="submission" date="2022-05" db="UniProtKB">
        <title>Purification, biochemical and molecular characterization of alpha-amylase inhibitor extracted from Saussurea costus.</title>
        <authorList>
            <person name="Tomather A.A."/>
            <person name="Abir B."/>
            <person name="Imen B.A."/>
        </authorList>
    </citation>
    <scope>PROTEIN SEQUENCE</scope>
    <source>
        <tissue evidence="2">Root</tissue>
    </source>
</reference>
<comment type="function">
    <text evidence="1">Alpha-amylase inhibitor.</text>
</comment>
<comment type="subcellular location">
    <subcellularLocation>
        <location evidence="1">Secreted</location>
    </subcellularLocation>
</comment>
<comment type="similarity">
    <text evidence="3">Belongs to the protease inhibitor I6 (cereal trypsin/alpha-amylase inhibitor) family.</text>
</comment>
<name>IAA1_SAUCO</name>
<dbReference type="GO" id="GO:0005576">
    <property type="term" value="C:extracellular region"/>
    <property type="evidence" value="ECO:0007669"/>
    <property type="project" value="UniProtKB-SubCell"/>
</dbReference>
<dbReference type="GO" id="GO:0015066">
    <property type="term" value="F:alpha-amylase inhibitor activity"/>
    <property type="evidence" value="ECO:0007669"/>
    <property type="project" value="UniProtKB-KW"/>
</dbReference>
<proteinExistence type="evidence at protein level"/>
<keyword id="KW-0022">Alpha-amylase inhibitor</keyword>
<keyword id="KW-0903">Direct protein sequencing</keyword>
<keyword id="KW-0964">Secreted</keyword>
<feature type="chain" id="PRO_0000456465" description="Alpha-amylase inhibitor 1">
    <location>
        <begin position="1"/>
        <end position="26"/>
    </location>
</feature>
<feature type="non-terminal residue" evidence="2">
    <location>
        <position position="26"/>
    </location>
</feature>